<proteinExistence type="inferred from homology"/>
<accession>Q9X1Q7</accession>
<name>RL19_THEMA</name>
<protein>
    <recommendedName>
        <fullName evidence="2">Large ribosomal subunit protein bL19</fullName>
    </recommendedName>
    <alternativeName>
        <fullName>50S ribosomal protein L19</fullName>
    </alternativeName>
</protein>
<reference key="1">
    <citation type="journal article" date="1999" name="Nature">
        <title>Evidence for lateral gene transfer between Archaea and Bacteria from genome sequence of Thermotoga maritima.</title>
        <authorList>
            <person name="Nelson K.E."/>
            <person name="Clayton R.A."/>
            <person name="Gill S.R."/>
            <person name="Gwinn M.L."/>
            <person name="Dodson R.J."/>
            <person name="Haft D.H."/>
            <person name="Hickey E.K."/>
            <person name="Peterson J.D."/>
            <person name="Nelson W.C."/>
            <person name="Ketchum K.A."/>
            <person name="McDonald L.A."/>
            <person name="Utterback T.R."/>
            <person name="Malek J.A."/>
            <person name="Linher K.D."/>
            <person name="Garrett M.M."/>
            <person name="Stewart A.M."/>
            <person name="Cotton M.D."/>
            <person name="Pratt M.S."/>
            <person name="Phillips C.A."/>
            <person name="Richardson D.L."/>
            <person name="Heidelberg J.F."/>
            <person name="Sutton G.G."/>
            <person name="Fleischmann R.D."/>
            <person name="Eisen J.A."/>
            <person name="White O."/>
            <person name="Salzberg S.L."/>
            <person name="Smith H.O."/>
            <person name="Venter J.C."/>
            <person name="Fraser C.M."/>
        </authorList>
    </citation>
    <scope>NUCLEOTIDE SEQUENCE [LARGE SCALE GENOMIC DNA]</scope>
    <source>
        <strain>ATCC 43589 / DSM 3109 / JCM 10099 / NBRC 100826 / MSB8</strain>
    </source>
</reference>
<evidence type="ECO:0000250" key="1"/>
<evidence type="ECO:0000305" key="2"/>
<comment type="function">
    <text evidence="1">This protein is located at the 30S-50S ribosomal subunit interface and may play a role in the structure and function of the aminoacyl-tRNA binding site.</text>
</comment>
<comment type="similarity">
    <text evidence="2">Belongs to the bacterial ribosomal protein bL19 family.</text>
</comment>
<gene>
    <name type="primary">rplS</name>
    <name type="ordered locus">TM_1571</name>
</gene>
<organism>
    <name type="scientific">Thermotoga maritima (strain ATCC 43589 / DSM 3109 / JCM 10099 / NBRC 100826 / MSB8)</name>
    <dbReference type="NCBI Taxonomy" id="243274"/>
    <lineage>
        <taxon>Bacteria</taxon>
        <taxon>Thermotogati</taxon>
        <taxon>Thermotogota</taxon>
        <taxon>Thermotogae</taxon>
        <taxon>Thermotogales</taxon>
        <taxon>Thermotogaceae</taxon>
        <taxon>Thermotoga</taxon>
    </lineage>
</organism>
<sequence length="115" mass="13442">MDHLVKIIEKKYEKKEIPDFRPGDTVRVHVKVIEGDRERTQVFEGIVIAKRGSGINKTFTVRRIGSHGVGVERIFPVHSPVVEKIEVVRKGKVRRAKLYYLRNVRGKIRIKERRD</sequence>
<dbReference type="EMBL" id="AE000512">
    <property type="protein sequence ID" value="AAD36638.1"/>
    <property type="molecule type" value="Genomic_DNA"/>
</dbReference>
<dbReference type="PIR" id="D72237">
    <property type="entry name" value="D72237"/>
</dbReference>
<dbReference type="RefSeq" id="NP_229371.1">
    <property type="nucleotide sequence ID" value="NC_000853.1"/>
</dbReference>
<dbReference type="RefSeq" id="WP_004081989.1">
    <property type="nucleotide sequence ID" value="NZ_CP011107.1"/>
</dbReference>
<dbReference type="SMR" id="Q9X1Q7"/>
<dbReference type="FunCoup" id="Q9X1Q7">
    <property type="interactions" value="368"/>
</dbReference>
<dbReference type="STRING" id="243274.TM_1571"/>
<dbReference type="PaxDb" id="243274-THEMA_06425"/>
<dbReference type="EnsemblBacteria" id="AAD36638">
    <property type="protein sequence ID" value="AAD36638"/>
    <property type="gene ID" value="TM_1571"/>
</dbReference>
<dbReference type="KEGG" id="tma:TM1571"/>
<dbReference type="KEGG" id="tmi:THEMA_06425"/>
<dbReference type="KEGG" id="tmm:Tmari_1579"/>
<dbReference type="KEGG" id="tmw:THMA_1606"/>
<dbReference type="eggNOG" id="COG0335">
    <property type="taxonomic scope" value="Bacteria"/>
</dbReference>
<dbReference type="InParanoid" id="Q9X1Q7"/>
<dbReference type="OrthoDB" id="9803541at2"/>
<dbReference type="Proteomes" id="UP000008183">
    <property type="component" value="Chromosome"/>
</dbReference>
<dbReference type="GO" id="GO:0022625">
    <property type="term" value="C:cytosolic large ribosomal subunit"/>
    <property type="evidence" value="ECO:0000318"/>
    <property type="project" value="GO_Central"/>
</dbReference>
<dbReference type="GO" id="GO:0003735">
    <property type="term" value="F:structural constituent of ribosome"/>
    <property type="evidence" value="ECO:0000318"/>
    <property type="project" value="GO_Central"/>
</dbReference>
<dbReference type="GO" id="GO:0006412">
    <property type="term" value="P:translation"/>
    <property type="evidence" value="ECO:0007669"/>
    <property type="project" value="UniProtKB-UniRule"/>
</dbReference>
<dbReference type="FunFam" id="2.30.30.790:FF:000001">
    <property type="entry name" value="50S ribosomal protein L19"/>
    <property type="match status" value="1"/>
</dbReference>
<dbReference type="Gene3D" id="2.30.30.790">
    <property type="match status" value="1"/>
</dbReference>
<dbReference type="HAMAP" id="MF_00402">
    <property type="entry name" value="Ribosomal_bL19"/>
    <property type="match status" value="1"/>
</dbReference>
<dbReference type="InterPro" id="IPR001857">
    <property type="entry name" value="Ribosomal_bL19"/>
</dbReference>
<dbReference type="InterPro" id="IPR018257">
    <property type="entry name" value="Ribosomal_bL19_CS"/>
</dbReference>
<dbReference type="InterPro" id="IPR038657">
    <property type="entry name" value="Ribosomal_bL19_sf"/>
</dbReference>
<dbReference type="InterPro" id="IPR008991">
    <property type="entry name" value="Translation_prot_SH3-like_sf"/>
</dbReference>
<dbReference type="NCBIfam" id="TIGR01024">
    <property type="entry name" value="rplS_bact"/>
    <property type="match status" value="1"/>
</dbReference>
<dbReference type="PANTHER" id="PTHR15680:SF9">
    <property type="entry name" value="LARGE RIBOSOMAL SUBUNIT PROTEIN BL19M"/>
    <property type="match status" value="1"/>
</dbReference>
<dbReference type="PANTHER" id="PTHR15680">
    <property type="entry name" value="RIBOSOMAL PROTEIN L19"/>
    <property type="match status" value="1"/>
</dbReference>
<dbReference type="Pfam" id="PF01245">
    <property type="entry name" value="Ribosomal_L19"/>
    <property type="match status" value="1"/>
</dbReference>
<dbReference type="PIRSF" id="PIRSF002191">
    <property type="entry name" value="Ribosomal_L19"/>
    <property type="match status" value="1"/>
</dbReference>
<dbReference type="PRINTS" id="PR00061">
    <property type="entry name" value="RIBOSOMALL19"/>
</dbReference>
<dbReference type="SUPFAM" id="SSF50104">
    <property type="entry name" value="Translation proteins SH3-like domain"/>
    <property type="match status" value="1"/>
</dbReference>
<dbReference type="PROSITE" id="PS01015">
    <property type="entry name" value="RIBOSOMAL_L19"/>
    <property type="match status" value="1"/>
</dbReference>
<keyword id="KW-1185">Reference proteome</keyword>
<keyword id="KW-0687">Ribonucleoprotein</keyword>
<keyword id="KW-0689">Ribosomal protein</keyword>
<feature type="chain" id="PRO_0000163556" description="Large ribosomal subunit protein bL19">
    <location>
        <begin position="1"/>
        <end position="115"/>
    </location>
</feature>